<feature type="chain" id="PRO_1000165621" description="Small ribosomal subunit protein uS13">
    <location>
        <begin position="1"/>
        <end position="122"/>
    </location>
</feature>
<feature type="region of interest" description="Disordered" evidence="2">
    <location>
        <begin position="96"/>
        <end position="122"/>
    </location>
</feature>
<reference key="1">
    <citation type="submission" date="2009-01" db="EMBL/GenBank/DDBJ databases">
        <title>Complete sequence of Geobacter sp. FRC-32.</title>
        <authorList>
            <consortium name="US DOE Joint Genome Institute"/>
            <person name="Lucas S."/>
            <person name="Copeland A."/>
            <person name="Lapidus A."/>
            <person name="Glavina del Rio T."/>
            <person name="Dalin E."/>
            <person name="Tice H."/>
            <person name="Bruce D."/>
            <person name="Goodwin L."/>
            <person name="Pitluck S."/>
            <person name="Saunders E."/>
            <person name="Brettin T."/>
            <person name="Detter J.C."/>
            <person name="Han C."/>
            <person name="Larimer F."/>
            <person name="Land M."/>
            <person name="Hauser L."/>
            <person name="Kyrpides N."/>
            <person name="Ovchinnikova G."/>
            <person name="Kostka J."/>
            <person name="Richardson P."/>
        </authorList>
    </citation>
    <scope>NUCLEOTIDE SEQUENCE [LARGE SCALE GENOMIC DNA]</scope>
    <source>
        <strain>DSM 22248 / JCM 15807 / FRC-32</strain>
    </source>
</reference>
<evidence type="ECO:0000255" key="1">
    <source>
        <dbReference type="HAMAP-Rule" id="MF_01315"/>
    </source>
</evidence>
<evidence type="ECO:0000256" key="2">
    <source>
        <dbReference type="SAM" id="MobiDB-lite"/>
    </source>
</evidence>
<evidence type="ECO:0000305" key="3"/>
<dbReference type="EMBL" id="CP001390">
    <property type="protein sequence ID" value="ACM21943.1"/>
    <property type="molecule type" value="Genomic_DNA"/>
</dbReference>
<dbReference type="RefSeq" id="WP_012648671.1">
    <property type="nucleotide sequence ID" value="NC_011979.1"/>
</dbReference>
<dbReference type="SMR" id="B9M6F5"/>
<dbReference type="STRING" id="316067.Geob_3602"/>
<dbReference type="KEGG" id="geo:Geob_3602"/>
<dbReference type="eggNOG" id="COG0099">
    <property type="taxonomic scope" value="Bacteria"/>
</dbReference>
<dbReference type="HOGENOM" id="CLU_103849_1_2_7"/>
<dbReference type="OrthoDB" id="9803610at2"/>
<dbReference type="Proteomes" id="UP000007721">
    <property type="component" value="Chromosome"/>
</dbReference>
<dbReference type="GO" id="GO:0005829">
    <property type="term" value="C:cytosol"/>
    <property type="evidence" value="ECO:0007669"/>
    <property type="project" value="TreeGrafter"/>
</dbReference>
<dbReference type="GO" id="GO:0015935">
    <property type="term" value="C:small ribosomal subunit"/>
    <property type="evidence" value="ECO:0007669"/>
    <property type="project" value="TreeGrafter"/>
</dbReference>
<dbReference type="GO" id="GO:0019843">
    <property type="term" value="F:rRNA binding"/>
    <property type="evidence" value="ECO:0007669"/>
    <property type="project" value="UniProtKB-UniRule"/>
</dbReference>
<dbReference type="GO" id="GO:0003735">
    <property type="term" value="F:structural constituent of ribosome"/>
    <property type="evidence" value="ECO:0007669"/>
    <property type="project" value="InterPro"/>
</dbReference>
<dbReference type="GO" id="GO:0000049">
    <property type="term" value="F:tRNA binding"/>
    <property type="evidence" value="ECO:0007669"/>
    <property type="project" value="UniProtKB-UniRule"/>
</dbReference>
<dbReference type="GO" id="GO:0006412">
    <property type="term" value="P:translation"/>
    <property type="evidence" value="ECO:0007669"/>
    <property type="project" value="UniProtKB-UniRule"/>
</dbReference>
<dbReference type="FunFam" id="1.10.8.50:FF:000001">
    <property type="entry name" value="30S ribosomal protein S13"/>
    <property type="match status" value="1"/>
</dbReference>
<dbReference type="FunFam" id="4.10.910.10:FF:000001">
    <property type="entry name" value="30S ribosomal protein S13"/>
    <property type="match status" value="1"/>
</dbReference>
<dbReference type="Gene3D" id="1.10.8.50">
    <property type="match status" value="1"/>
</dbReference>
<dbReference type="Gene3D" id="4.10.910.10">
    <property type="entry name" value="30s ribosomal protein s13, domain 2"/>
    <property type="match status" value="1"/>
</dbReference>
<dbReference type="HAMAP" id="MF_01315">
    <property type="entry name" value="Ribosomal_uS13"/>
    <property type="match status" value="1"/>
</dbReference>
<dbReference type="InterPro" id="IPR027437">
    <property type="entry name" value="Rbsml_uS13_C"/>
</dbReference>
<dbReference type="InterPro" id="IPR001892">
    <property type="entry name" value="Ribosomal_uS13"/>
</dbReference>
<dbReference type="InterPro" id="IPR010979">
    <property type="entry name" value="Ribosomal_uS13-like_H2TH"/>
</dbReference>
<dbReference type="InterPro" id="IPR019980">
    <property type="entry name" value="Ribosomal_uS13_bac-type"/>
</dbReference>
<dbReference type="InterPro" id="IPR018269">
    <property type="entry name" value="Ribosomal_uS13_CS"/>
</dbReference>
<dbReference type="NCBIfam" id="TIGR03631">
    <property type="entry name" value="uS13_bact"/>
    <property type="match status" value="1"/>
</dbReference>
<dbReference type="PANTHER" id="PTHR10871">
    <property type="entry name" value="30S RIBOSOMAL PROTEIN S13/40S RIBOSOMAL PROTEIN S18"/>
    <property type="match status" value="1"/>
</dbReference>
<dbReference type="PANTHER" id="PTHR10871:SF1">
    <property type="entry name" value="SMALL RIBOSOMAL SUBUNIT PROTEIN US13M"/>
    <property type="match status" value="1"/>
</dbReference>
<dbReference type="Pfam" id="PF00416">
    <property type="entry name" value="Ribosomal_S13"/>
    <property type="match status" value="1"/>
</dbReference>
<dbReference type="PIRSF" id="PIRSF002134">
    <property type="entry name" value="Ribosomal_S13"/>
    <property type="match status" value="1"/>
</dbReference>
<dbReference type="SUPFAM" id="SSF46946">
    <property type="entry name" value="S13-like H2TH domain"/>
    <property type="match status" value="1"/>
</dbReference>
<dbReference type="PROSITE" id="PS00646">
    <property type="entry name" value="RIBOSOMAL_S13_1"/>
    <property type="match status" value="1"/>
</dbReference>
<dbReference type="PROSITE" id="PS50159">
    <property type="entry name" value="RIBOSOMAL_S13_2"/>
    <property type="match status" value="1"/>
</dbReference>
<sequence length="122" mass="13683">MARIAGIDLPRNKRIEIALTYIYGIGRSTSQKILAEAGVDANTRSDNLTESEVAKIRENIDKNVKVEGDLRRDISMNIKRLMDLGCYRGLRHRKGLPVHGQRTKTNARTRKGPARTVAGKKK</sequence>
<gene>
    <name evidence="1" type="primary">rpsM</name>
    <name type="ordered locus">Geob_3602</name>
</gene>
<comment type="function">
    <text evidence="1">Located at the top of the head of the 30S subunit, it contacts several helices of the 16S rRNA. In the 70S ribosome it contacts the 23S rRNA (bridge B1a) and protein L5 of the 50S subunit (bridge B1b), connecting the 2 subunits; these bridges are implicated in subunit movement. Contacts the tRNAs in the A and P-sites.</text>
</comment>
<comment type="subunit">
    <text evidence="1">Part of the 30S ribosomal subunit. Forms a loose heterodimer with protein S19. Forms two bridges to the 50S subunit in the 70S ribosome.</text>
</comment>
<comment type="similarity">
    <text evidence="1">Belongs to the universal ribosomal protein uS13 family.</text>
</comment>
<accession>B9M6F5</accession>
<protein>
    <recommendedName>
        <fullName evidence="1">Small ribosomal subunit protein uS13</fullName>
    </recommendedName>
    <alternativeName>
        <fullName evidence="3">30S ribosomal protein S13</fullName>
    </alternativeName>
</protein>
<keyword id="KW-1185">Reference proteome</keyword>
<keyword id="KW-0687">Ribonucleoprotein</keyword>
<keyword id="KW-0689">Ribosomal protein</keyword>
<keyword id="KW-0694">RNA-binding</keyword>
<keyword id="KW-0699">rRNA-binding</keyword>
<keyword id="KW-0820">tRNA-binding</keyword>
<organism>
    <name type="scientific">Geotalea daltonii (strain DSM 22248 / JCM 15807 / FRC-32)</name>
    <name type="common">Geobacter daltonii</name>
    <dbReference type="NCBI Taxonomy" id="316067"/>
    <lineage>
        <taxon>Bacteria</taxon>
        <taxon>Pseudomonadati</taxon>
        <taxon>Thermodesulfobacteriota</taxon>
        <taxon>Desulfuromonadia</taxon>
        <taxon>Geobacterales</taxon>
        <taxon>Geobacteraceae</taxon>
        <taxon>Geotalea</taxon>
    </lineage>
</organism>
<name>RS13_GEODF</name>
<proteinExistence type="inferred from homology"/>